<proteinExistence type="inferred from homology"/>
<accession>Q0W081</accession>
<sequence>MPNYKVVLEAAWIVKDAKSVDDAMSVAISEAGKRLNAAKMDFVEVEVGGTFCPFCGEPFDSVFVVAGTGIVGLLLEMKVFNAESKEHAERIARKGIGKALRDVPLKVVDITEAE</sequence>
<organism>
    <name type="scientific">Methanocella arvoryzae (strain DSM 22066 / NBRC 105507 / MRE50)</name>
    <dbReference type="NCBI Taxonomy" id="351160"/>
    <lineage>
        <taxon>Archaea</taxon>
        <taxon>Methanobacteriati</taxon>
        <taxon>Methanobacteriota</taxon>
        <taxon>Stenosarchaea group</taxon>
        <taxon>Methanomicrobia</taxon>
        <taxon>Methanocellales</taxon>
        <taxon>Methanocellaceae</taxon>
        <taxon>Methanocella</taxon>
    </lineage>
</organism>
<protein>
    <recommendedName>
        <fullName evidence="1">UPF0212 protein UNCMA_00570</fullName>
    </recommendedName>
</protein>
<reference key="1">
    <citation type="journal article" date="2006" name="Science">
        <title>Genome of rice cluster I archaea -- the key methane producers in the rice rhizosphere.</title>
        <authorList>
            <person name="Erkel C."/>
            <person name="Kube M."/>
            <person name="Reinhardt R."/>
            <person name="Liesack W."/>
        </authorList>
    </citation>
    <scope>NUCLEOTIDE SEQUENCE [LARGE SCALE GENOMIC DNA]</scope>
    <source>
        <strain>DSM 22066 / NBRC 105507 / MRE50</strain>
    </source>
</reference>
<gene>
    <name type="ordered locus">UNCMA_00570</name>
    <name type="ORF">RRC524</name>
</gene>
<name>Y057_METAR</name>
<comment type="similarity">
    <text evidence="1">Belongs to the UPF0212 family.</text>
</comment>
<dbReference type="EMBL" id="AM114193">
    <property type="protein sequence ID" value="CAJ38212.1"/>
    <property type="molecule type" value="Genomic_DNA"/>
</dbReference>
<dbReference type="RefSeq" id="WP_012034382.1">
    <property type="nucleotide sequence ID" value="NC_009464.1"/>
</dbReference>
<dbReference type="STRING" id="351160.RRC524"/>
<dbReference type="GeneID" id="5142903"/>
<dbReference type="KEGG" id="rci:RRC524"/>
<dbReference type="PATRIC" id="fig|351160.9.peg.58"/>
<dbReference type="eggNOG" id="arCOG02119">
    <property type="taxonomic scope" value="Archaea"/>
</dbReference>
<dbReference type="OrthoDB" id="63517at2157"/>
<dbReference type="Proteomes" id="UP000000663">
    <property type="component" value="Chromosome"/>
</dbReference>
<dbReference type="HAMAP" id="MF_01223">
    <property type="entry name" value="UPF0212"/>
    <property type="match status" value="1"/>
</dbReference>
<dbReference type="InterPro" id="IPR007564">
    <property type="entry name" value="UPF0212"/>
</dbReference>
<dbReference type="NCBIfam" id="NF003035">
    <property type="entry name" value="PRK03922.1"/>
    <property type="match status" value="1"/>
</dbReference>
<dbReference type="PANTHER" id="PTHR42199">
    <property type="entry name" value="UPF0212 PROTEIN MJ0068"/>
    <property type="match status" value="1"/>
</dbReference>
<dbReference type="PANTHER" id="PTHR42199:SF1">
    <property type="entry name" value="UPF0212 PROTEIN TK1194"/>
    <property type="match status" value="1"/>
</dbReference>
<dbReference type="Pfam" id="PF04475">
    <property type="entry name" value="DUF555"/>
    <property type="match status" value="1"/>
</dbReference>
<dbReference type="PIRSF" id="PIRSF016934">
    <property type="entry name" value="UCP016934"/>
    <property type="match status" value="1"/>
</dbReference>
<feature type="chain" id="PRO_1000066795" description="UPF0212 protein UNCMA_00570">
    <location>
        <begin position="1"/>
        <end position="114"/>
    </location>
</feature>
<evidence type="ECO:0000255" key="1">
    <source>
        <dbReference type="HAMAP-Rule" id="MF_01223"/>
    </source>
</evidence>
<keyword id="KW-1185">Reference proteome</keyword>